<accession>A9N099</accession>
<comment type="function">
    <text evidence="1">Probably involved in ribonucleotide reductase function.</text>
</comment>
<comment type="similarity">
    <text evidence="1">Belongs to the NrdI family.</text>
</comment>
<sequence>MSALVYFSSSSENTHRFMQRLGLPATRIPLNERERIQVDEPYILVVPSYGGGGMAGAVPRQVIRFLNDEHNRARIRGVIASGNRNFGDAWGCAGDVIAQKCGVPWLYRFELMGTQRDIDNVRKGVNEFWQQLSRSA</sequence>
<feature type="chain" id="PRO_1000076301" description="Protein NrdI">
    <location>
        <begin position="1"/>
        <end position="136"/>
    </location>
</feature>
<protein>
    <recommendedName>
        <fullName evidence="1">Protein NrdI</fullName>
    </recommendedName>
</protein>
<reference key="1">
    <citation type="submission" date="2007-11" db="EMBL/GenBank/DDBJ databases">
        <authorList>
            <consortium name="The Salmonella enterica serovar Paratyphi B Genome Sequencing Project"/>
            <person name="McClelland M."/>
            <person name="Sanderson E.K."/>
            <person name="Porwollik S."/>
            <person name="Spieth J."/>
            <person name="Clifton W.S."/>
            <person name="Fulton R."/>
            <person name="Cordes M."/>
            <person name="Wollam A."/>
            <person name="Shah N."/>
            <person name="Pepin K."/>
            <person name="Bhonagiri V."/>
            <person name="Nash W."/>
            <person name="Johnson M."/>
            <person name="Thiruvilangam P."/>
            <person name="Wilson R."/>
        </authorList>
    </citation>
    <scope>NUCLEOTIDE SEQUENCE [LARGE SCALE GENOMIC DNA]</scope>
    <source>
        <strain>ATCC BAA-1250 / SPB7</strain>
    </source>
</reference>
<organism>
    <name type="scientific">Salmonella paratyphi B (strain ATCC BAA-1250 / SPB7)</name>
    <dbReference type="NCBI Taxonomy" id="1016998"/>
    <lineage>
        <taxon>Bacteria</taxon>
        <taxon>Pseudomonadati</taxon>
        <taxon>Pseudomonadota</taxon>
        <taxon>Gammaproteobacteria</taxon>
        <taxon>Enterobacterales</taxon>
        <taxon>Enterobacteriaceae</taxon>
        <taxon>Salmonella</taxon>
    </lineage>
</organism>
<evidence type="ECO:0000255" key="1">
    <source>
        <dbReference type="HAMAP-Rule" id="MF_00128"/>
    </source>
</evidence>
<dbReference type="EMBL" id="CP000886">
    <property type="protein sequence ID" value="ABX68833.1"/>
    <property type="molecule type" value="Genomic_DNA"/>
</dbReference>
<dbReference type="RefSeq" id="WP_001275402.1">
    <property type="nucleotide sequence ID" value="NC_010102.1"/>
</dbReference>
<dbReference type="SMR" id="A9N099"/>
<dbReference type="KEGG" id="spq:SPAB_03486"/>
<dbReference type="PATRIC" id="fig|1016998.12.peg.3287"/>
<dbReference type="HOGENOM" id="CLU_114845_0_0_6"/>
<dbReference type="BioCyc" id="SENT1016998:SPAB_RS14210-MONOMER"/>
<dbReference type="Proteomes" id="UP000008556">
    <property type="component" value="Chromosome"/>
</dbReference>
<dbReference type="GO" id="GO:0010181">
    <property type="term" value="F:FMN binding"/>
    <property type="evidence" value="ECO:0007669"/>
    <property type="project" value="InterPro"/>
</dbReference>
<dbReference type="GO" id="GO:0036211">
    <property type="term" value="P:protein modification process"/>
    <property type="evidence" value="ECO:0007669"/>
    <property type="project" value="InterPro"/>
</dbReference>
<dbReference type="FunFam" id="3.40.50.360:FF:000005">
    <property type="entry name" value="Protein NrdI"/>
    <property type="match status" value="1"/>
</dbReference>
<dbReference type="Gene3D" id="3.40.50.360">
    <property type="match status" value="1"/>
</dbReference>
<dbReference type="HAMAP" id="MF_00128">
    <property type="entry name" value="NrdI"/>
    <property type="match status" value="1"/>
</dbReference>
<dbReference type="InterPro" id="IPR029039">
    <property type="entry name" value="Flavoprotein-like_sf"/>
</dbReference>
<dbReference type="InterPro" id="IPR020852">
    <property type="entry name" value="RNR_Ib_NrdI_bac"/>
</dbReference>
<dbReference type="InterPro" id="IPR004465">
    <property type="entry name" value="RNR_NrdI"/>
</dbReference>
<dbReference type="NCBIfam" id="TIGR00333">
    <property type="entry name" value="nrdI"/>
    <property type="match status" value="1"/>
</dbReference>
<dbReference type="PANTHER" id="PTHR37297">
    <property type="entry name" value="PROTEIN NRDI"/>
    <property type="match status" value="1"/>
</dbReference>
<dbReference type="PANTHER" id="PTHR37297:SF1">
    <property type="entry name" value="PROTEIN NRDI"/>
    <property type="match status" value="1"/>
</dbReference>
<dbReference type="Pfam" id="PF07972">
    <property type="entry name" value="Flavodoxin_NdrI"/>
    <property type="match status" value="1"/>
</dbReference>
<dbReference type="PIRSF" id="PIRSF005087">
    <property type="entry name" value="NrdI"/>
    <property type="match status" value="1"/>
</dbReference>
<dbReference type="SUPFAM" id="SSF52218">
    <property type="entry name" value="Flavoproteins"/>
    <property type="match status" value="1"/>
</dbReference>
<gene>
    <name evidence="1" type="primary">nrdI</name>
    <name type="ordered locus">SPAB_03486</name>
</gene>
<proteinExistence type="inferred from homology"/>
<name>NRDI_SALPB</name>